<keyword id="KW-0489">Methyltransferase</keyword>
<keyword id="KW-1185">Reference proteome</keyword>
<keyword id="KW-0949">S-adenosyl-L-methionine</keyword>
<keyword id="KW-0808">Transferase</keyword>
<gene>
    <name type="primary">ppm1</name>
    <name type="ORF">AfA19D12.070</name>
    <name type="ORF">AFUA_1G13930</name>
</gene>
<proteinExistence type="inferred from homology"/>
<organism>
    <name type="scientific">Aspergillus fumigatus (strain ATCC MYA-4609 / CBS 101355 / FGSC A1100 / Af293)</name>
    <name type="common">Neosartorya fumigata</name>
    <dbReference type="NCBI Taxonomy" id="330879"/>
    <lineage>
        <taxon>Eukaryota</taxon>
        <taxon>Fungi</taxon>
        <taxon>Dikarya</taxon>
        <taxon>Ascomycota</taxon>
        <taxon>Pezizomycotina</taxon>
        <taxon>Eurotiomycetes</taxon>
        <taxon>Eurotiomycetidae</taxon>
        <taxon>Eurotiales</taxon>
        <taxon>Aspergillaceae</taxon>
        <taxon>Aspergillus</taxon>
        <taxon>Aspergillus subgen. Fumigati</taxon>
    </lineage>
</organism>
<sequence length="398" mass="43370">MSASQIPNLNTLRRGGGRGRLRGRGGFETGAPSEDRHGSRGLAAQDRVVQGTDNDASVSRLSAVEIGYLEDPFAKVLTPPGSGTRRLPIINRGTYVRTTAIDRLVARFLEGPSQTKKQIISLGAGSDTRVFRLLSSRSSASSSDLIYHEIDFSANTAAKIKFIRAAPLLQRTLGLGSAQNVAIPDSGDALHSPTYHLHPVDLRTLAASGSATTSRSPSSPNPAEKDQPPCPLQGVDPTLPTLLISECCLVYLSPREAADVVDYFTKTLFPASVPLGLIIYEPIRPDDAFGRTMVANLATRGIQLQTLHEYASLEAQRRRLREHGLHSGQAAADIDFIWERWVSEAEKERVARLEMLDEVEEWQLLARHYCVAWGWTSGAGEDTTVFDGWKEIDGQTGD</sequence>
<protein>
    <recommendedName>
        <fullName>Leucine carboxyl methyltransferase 1</fullName>
        <ecNumber>2.1.1.233</ecNumber>
    </recommendedName>
    <alternativeName>
        <fullName>Protein phosphatase methyltransferase 1</fullName>
    </alternativeName>
    <alternativeName>
        <fullName>[Phosphatase 2A protein]-leucine-carboxy methyltransferase 1</fullName>
    </alternativeName>
</protein>
<reference key="1">
    <citation type="journal article" date="2004" name="Fungal Genet. Biol.">
        <title>Insight into the genome of Aspergillus fumigatus: analysis of a 922 kb region encompassing the nitrate assimilation gene cluster.</title>
        <authorList>
            <person name="Pain A."/>
            <person name="Woodward J.R."/>
            <person name="Quail M.A."/>
            <person name="Anderson M.J."/>
            <person name="Clark R."/>
            <person name="Collins M."/>
            <person name="Fosker N."/>
            <person name="Fraser A."/>
            <person name="Harris D.E."/>
            <person name="Larke N."/>
            <person name="Murphy L.D."/>
            <person name="Humphray S."/>
            <person name="O'Neil S."/>
            <person name="Pertea M."/>
            <person name="Price C."/>
            <person name="Rabbinowitsch E."/>
            <person name="Rajandream M.A."/>
            <person name="Salzberg S.L."/>
            <person name="Saunders D."/>
            <person name="Seeger K."/>
            <person name="Sharp S."/>
            <person name="Warren T."/>
            <person name="Denning D.W."/>
            <person name="Barrell B.G."/>
            <person name="Hall N."/>
        </authorList>
    </citation>
    <scope>NUCLEOTIDE SEQUENCE [LARGE SCALE GENOMIC DNA]</scope>
    <source>
        <strain>ATCC MYA-4609 / CBS 101355 / FGSC A1100 / Af293</strain>
    </source>
</reference>
<reference key="2">
    <citation type="journal article" date="2005" name="Nature">
        <title>Genomic sequence of the pathogenic and allergenic filamentous fungus Aspergillus fumigatus.</title>
        <authorList>
            <person name="Nierman W.C."/>
            <person name="Pain A."/>
            <person name="Anderson M.J."/>
            <person name="Wortman J.R."/>
            <person name="Kim H.S."/>
            <person name="Arroyo J."/>
            <person name="Berriman M."/>
            <person name="Abe K."/>
            <person name="Archer D.B."/>
            <person name="Bermejo C."/>
            <person name="Bennett J.W."/>
            <person name="Bowyer P."/>
            <person name="Chen D."/>
            <person name="Collins M."/>
            <person name="Coulsen R."/>
            <person name="Davies R."/>
            <person name="Dyer P.S."/>
            <person name="Farman M.L."/>
            <person name="Fedorova N."/>
            <person name="Fedorova N.D."/>
            <person name="Feldblyum T.V."/>
            <person name="Fischer R."/>
            <person name="Fosker N."/>
            <person name="Fraser A."/>
            <person name="Garcia J.L."/>
            <person name="Garcia M.J."/>
            <person name="Goble A."/>
            <person name="Goldman G.H."/>
            <person name="Gomi K."/>
            <person name="Griffith-Jones S."/>
            <person name="Gwilliam R."/>
            <person name="Haas B.J."/>
            <person name="Haas H."/>
            <person name="Harris D.E."/>
            <person name="Horiuchi H."/>
            <person name="Huang J."/>
            <person name="Humphray S."/>
            <person name="Jimenez J."/>
            <person name="Keller N."/>
            <person name="Khouri H."/>
            <person name="Kitamoto K."/>
            <person name="Kobayashi T."/>
            <person name="Konzack S."/>
            <person name="Kulkarni R."/>
            <person name="Kumagai T."/>
            <person name="Lafton A."/>
            <person name="Latge J.-P."/>
            <person name="Li W."/>
            <person name="Lord A."/>
            <person name="Lu C."/>
            <person name="Majoros W.H."/>
            <person name="May G.S."/>
            <person name="Miller B.L."/>
            <person name="Mohamoud Y."/>
            <person name="Molina M."/>
            <person name="Monod M."/>
            <person name="Mouyna I."/>
            <person name="Mulligan S."/>
            <person name="Murphy L.D."/>
            <person name="O'Neil S."/>
            <person name="Paulsen I."/>
            <person name="Penalva M.A."/>
            <person name="Pertea M."/>
            <person name="Price C."/>
            <person name="Pritchard B.L."/>
            <person name="Quail M.A."/>
            <person name="Rabbinowitsch E."/>
            <person name="Rawlins N."/>
            <person name="Rajandream M.A."/>
            <person name="Reichard U."/>
            <person name="Renauld H."/>
            <person name="Robson G.D."/>
            <person name="Rodriguez de Cordoba S."/>
            <person name="Rodriguez-Pena J.M."/>
            <person name="Ronning C.M."/>
            <person name="Rutter S."/>
            <person name="Salzberg S.L."/>
            <person name="Sanchez M."/>
            <person name="Sanchez-Ferrero J.C."/>
            <person name="Saunders D."/>
            <person name="Seeger K."/>
            <person name="Squares R."/>
            <person name="Squares S."/>
            <person name="Takeuchi M."/>
            <person name="Tekaia F."/>
            <person name="Turner G."/>
            <person name="Vazquez de Aldana C.R."/>
            <person name="Weidman J."/>
            <person name="White O."/>
            <person name="Woodward J.R."/>
            <person name="Yu J.-H."/>
            <person name="Fraser C.M."/>
            <person name="Galagan J.E."/>
            <person name="Asai K."/>
            <person name="Machida M."/>
            <person name="Hall N."/>
            <person name="Barrell B.G."/>
            <person name="Denning D.W."/>
        </authorList>
    </citation>
    <scope>NUCLEOTIDE SEQUENCE [LARGE SCALE GENOMIC DNA]</scope>
    <source>
        <strain>ATCC MYA-4609 / CBS 101355 / FGSC A1100 / Af293</strain>
    </source>
</reference>
<evidence type="ECO:0000250" key="1"/>
<evidence type="ECO:0000256" key="2">
    <source>
        <dbReference type="SAM" id="MobiDB-lite"/>
    </source>
</evidence>
<evidence type="ECO:0000305" key="3"/>
<comment type="function">
    <text evidence="1">Methylates the carboxyl group of the C-terminal leucine residue of protein phosphatase 2A catalytic subunits to form alpha-leucine ester residues.</text>
</comment>
<comment type="catalytic activity">
    <reaction>
        <text>[phosphatase 2A protein]-C-terminal L-leucine + S-adenosyl-L-methionine = [phosphatase 2A protein]-C-terminal L-leucine methyl ester + S-adenosyl-L-homocysteine</text>
        <dbReference type="Rhea" id="RHEA:48544"/>
        <dbReference type="Rhea" id="RHEA-COMP:12134"/>
        <dbReference type="Rhea" id="RHEA-COMP:12135"/>
        <dbReference type="ChEBI" id="CHEBI:57856"/>
        <dbReference type="ChEBI" id="CHEBI:59789"/>
        <dbReference type="ChEBI" id="CHEBI:90516"/>
        <dbReference type="ChEBI" id="CHEBI:90517"/>
        <dbReference type="EC" id="2.1.1.233"/>
    </reaction>
</comment>
<comment type="similarity">
    <text evidence="3">Belongs to the methyltransferase superfamily. LCMT family.</text>
</comment>
<comment type="sequence caution" evidence="3">
    <conflict type="erroneous gene model prediction">
        <sequence resource="EMBL-CDS" id="CAF32102"/>
    </conflict>
</comment>
<name>LCMT1_ASPFU</name>
<accession>Q4WS57</accession>
<accession>Q6MYA1</accession>
<feature type="chain" id="PRO_0000226123" description="Leucine carboxyl methyltransferase 1">
    <location>
        <begin position="1"/>
        <end position="398"/>
    </location>
</feature>
<feature type="region of interest" description="Disordered" evidence="2">
    <location>
        <begin position="1"/>
        <end position="54"/>
    </location>
</feature>
<feature type="region of interest" description="Disordered" evidence="2">
    <location>
        <begin position="208"/>
        <end position="232"/>
    </location>
</feature>
<feature type="compositionally biased region" description="Polar residues" evidence="2">
    <location>
        <begin position="1"/>
        <end position="11"/>
    </location>
</feature>
<feature type="compositionally biased region" description="Low complexity" evidence="2">
    <location>
        <begin position="208"/>
        <end position="218"/>
    </location>
</feature>
<feature type="binding site" evidence="1">
    <location>
        <position position="97"/>
    </location>
    <ligand>
        <name>S-adenosyl-L-methionine</name>
        <dbReference type="ChEBI" id="CHEBI:59789"/>
    </ligand>
</feature>
<feature type="binding site" evidence="1">
    <location>
        <position position="123"/>
    </location>
    <ligand>
        <name>S-adenosyl-L-methionine</name>
        <dbReference type="ChEBI" id="CHEBI:59789"/>
    </ligand>
</feature>
<feature type="binding site" evidence="1">
    <location>
        <position position="151"/>
    </location>
    <ligand>
        <name>S-adenosyl-L-methionine</name>
        <dbReference type="ChEBI" id="CHEBI:59789"/>
    </ligand>
</feature>
<feature type="binding site" evidence="1">
    <location>
        <begin position="201"/>
        <end position="202"/>
    </location>
    <ligand>
        <name>S-adenosyl-L-methionine</name>
        <dbReference type="ChEBI" id="CHEBI:59789"/>
    </ligand>
</feature>
<feature type="binding site" evidence="1">
    <location>
        <position position="246"/>
    </location>
    <ligand>
        <name>S-adenosyl-L-methionine</name>
        <dbReference type="ChEBI" id="CHEBI:59789"/>
    </ligand>
</feature>
<dbReference type="EC" id="2.1.1.233"/>
<dbReference type="EMBL" id="BX649607">
    <property type="protein sequence ID" value="CAF32102.1"/>
    <property type="status" value="ALT_SEQ"/>
    <property type="molecule type" value="Genomic_DNA"/>
</dbReference>
<dbReference type="EMBL" id="AAHF01000004">
    <property type="protein sequence ID" value="EAL90725.1"/>
    <property type="molecule type" value="Genomic_DNA"/>
</dbReference>
<dbReference type="RefSeq" id="XP_752763.1">
    <property type="nucleotide sequence ID" value="XM_747670.1"/>
</dbReference>
<dbReference type="SMR" id="Q4WS57"/>
<dbReference type="FunCoup" id="Q4WS57">
    <property type="interactions" value="548"/>
</dbReference>
<dbReference type="STRING" id="330879.Q4WS57"/>
<dbReference type="EnsemblFungi" id="EAL90725">
    <property type="protein sequence ID" value="EAL90725"/>
    <property type="gene ID" value="AFUA_1G13930"/>
</dbReference>
<dbReference type="GeneID" id="3510304"/>
<dbReference type="KEGG" id="afm:AFUA_1G13930"/>
<dbReference type="VEuPathDB" id="FungiDB:Afu1g13930"/>
<dbReference type="eggNOG" id="KOG2918">
    <property type="taxonomic scope" value="Eukaryota"/>
</dbReference>
<dbReference type="HOGENOM" id="CLU_031312_1_1_1"/>
<dbReference type="InParanoid" id="Q4WS57"/>
<dbReference type="OMA" id="IIYEPIR"/>
<dbReference type="OrthoDB" id="203237at2759"/>
<dbReference type="Proteomes" id="UP000002530">
    <property type="component" value="Chromosome 1"/>
</dbReference>
<dbReference type="GO" id="GO:0018423">
    <property type="term" value="F:protein C-terminal leucine carboxyl O-methyltransferase activity"/>
    <property type="evidence" value="ECO:0000318"/>
    <property type="project" value="GO_Central"/>
</dbReference>
<dbReference type="GO" id="GO:0032259">
    <property type="term" value="P:methylation"/>
    <property type="evidence" value="ECO:0007669"/>
    <property type="project" value="UniProtKB-KW"/>
</dbReference>
<dbReference type="FunFam" id="3.40.50.150:FF:000369">
    <property type="entry name" value="Leucine carboxyl methyltransferase 1"/>
    <property type="match status" value="1"/>
</dbReference>
<dbReference type="Gene3D" id="3.40.50.150">
    <property type="entry name" value="Vaccinia Virus protein VP39"/>
    <property type="match status" value="1"/>
</dbReference>
<dbReference type="InterPro" id="IPR016651">
    <property type="entry name" value="LCMT1"/>
</dbReference>
<dbReference type="InterPro" id="IPR007213">
    <property type="entry name" value="Ppm1/Ppm2/Tcmp"/>
</dbReference>
<dbReference type="InterPro" id="IPR029063">
    <property type="entry name" value="SAM-dependent_MTases_sf"/>
</dbReference>
<dbReference type="PANTHER" id="PTHR13600">
    <property type="entry name" value="LEUCINE CARBOXYL METHYLTRANSFERASE"/>
    <property type="match status" value="1"/>
</dbReference>
<dbReference type="PANTHER" id="PTHR13600:SF21">
    <property type="entry name" value="LEUCINE CARBOXYL METHYLTRANSFERASE 1"/>
    <property type="match status" value="1"/>
</dbReference>
<dbReference type="Pfam" id="PF04072">
    <property type="entry name" value="LCM"/>
    <property type="match status" value="1"/>
</dbReference>
<dbReference type="PIRSF" id="PIRSF016305">
    <property type="entry name" value="LCM_mtfrase"/>
    <property type="match status" value="1"/>
</dbReference>
<dbReference type="SUPFAM" id="SSF53335">
    <property type="entry name" value="S-adenosyl-L-methionine-dependent methyltransferases"/>
    <property type="match status" value="1"/>
</dbReference>